<proteinExistence type="inferred from homology"/>
<gene>
    <name type="ordered locus">AF_2154</name>
</gene>
<protein>
    <recommendedName>
        <fullName>UPF0179 protein AF_2154</fullName>
    </recommendedName>
</protein>
<comment type="similarity">
    <text evidence="1">Belongs to the UPF0179 family.</text>
</comment>
<comment type="sequence caution" evidence="1">
    <conflict type="erroneous initiation">
        <sequence resource="EMBL-CDS" id="AAB89086"/>
    </conflict>
</comment>
<feature type="chain" id="PRO_0000156868" description="UPF0179 protein AF_2154">
    <location>
        <begin position="1"/>
        <end position="153"/>
    </location>
</feature>
<reference key="1">
    <citation type="journal article" date="1997" name="Nature">
        <title>The complete genome sequence of the hyperthermophilic, sulphate-reducing archaeon Archaeoglobus fulgidus.</title>
        <authorList>
            <person name="Klenk H.-P."/>
            <person name="Clayton R.A."/>
            <person name="Tomb J.-F."/>
            <person name="White O."/>
            <person name="Nelson K.E."/>
            <person name="Ketchum K.A."/>
            <person name="Dodson R.J."/>
            <person name="Gwinn M.L."/>
            <person name="Hickey E.K."/>
            <person name="Peterson J.D."/>
            <person name="Richardson D.L."/>
            <person name="Kerlavage A.R."/>
            <person name="Graham D.E."/>
            <person name="Kyrpides N.C."/>
            <person name="Fleischmann R.D."/>
            <person name="Quackenbush J."/>
            <person name="Lee N.H."/>
            <person name="Sutton G.G."/>
            <person name="Gill S.R."/>
            <person name="Kirkness E.F."/>
            <person name="Dougherty B.A."/>
            <person name="McKenney K."/>
            <person name="Adams M.D."/>
            <person name="Loftus B.J."/>
            <person name="Peterson S.N."/>
            <person name="Reich C.I."/>
            <person name="McNeil L.K."/>
            <person name="Badger J.H."/>
            <person name="Glodek A."/>
            <person name="Zhou L."/>
            <person name="Overbeek R."/>
            <person name="Gocayne J.D."/>
            <person name="Weidman J.F."/>
            <person name="McDonald L.A."/>
            <person name="Utterback T.R."/>
            <person name="Cotton M.D."/>
            <person name="Spriggs T."/>
            <person name="Artiach P."/>
            <person name="Kaine B.P."/>
            <person name="Sykes S.M."/>
            <person name="Sadow P.W."/>
            <person name="D'Andrea K.P."/>
            <person name="Bowman C."/>
            <person name="Fujii C."/>
            <person name="Garland S.A."/>
            <person name="Mason T.M."/>
            <person name="Olsen G.J."/>
            <person name="Fraser C.M."/>
            <person name="Smith H.O."/>
            <person name="Woese C.R."/>
            <person name="Venter J.C."/>
        </authorList>
    </citation>
    <scope>NUCLEOTIDE SEQUENCE [LARGE SCALE GENOMIC DNA]</scope>
    <source>
        <strain>ATCC 49558 / DSM 4304 / JCM 9628 / NBRC 100126 / VC-16</strain>
    </source>
</reference>
<dbReference type="EMBL" id="AE000782">
    <property type="protein sequence ID" value="AAB89086.1"/>
    <property type="status" value="ALT_INIT"/>
    <property type="molecule type" value="Genomic_DNA"/>
</dbReference>
<dbReference type="PIR" id="B69519">
    <property type="entry name" value="B69519"/>
</dbReference>
<dbReference type="RefSeq" id="WP_048064767.1">
    <property type="nucleotide sequence ID" value="NC_000917.1"/>
</dbReference>
<dbReference type="STRING" id="224325.AF_2154"/>
<dbReference type="PaxDb" id="224325-AF_2154"/>
<dbReference type="EnsemblBacteria" id="AAB89086">
    <property type="protein sequence ID" value="AAB89086"/>
    <property type="gene ID" value="AF_2154"/>
</dbReference>
<dbReference type="KEGG" id="afu:AF_2154"/>
<dbReference type="eggNOG" id="arCOG04477">
    <property type="taxonomic scope" value="Archaea"/>
</dbReference>
<dbReference type="HOGENOM" id="CLU_121764_0_0_2"/>
<dbReference type="OrthoDB" id="24613at2157"/>
<dbReference type="PhylomeDB" id="O28128"/>
<dbReference type="Proteomes" id="UP000002199">
    <property type="component" value="Chromosome"/>
</dbReference>
<dbReference type="HAMAP" id="MF_00498">
    <property type="entry name" value="UPF0179"/>
    <property type="match status" value="1"/>
</dbReference>
<dbReference type="InterPro" id="IPR005369">
    <property type="entry name" value="UPF0179"/>
</dbReference>
<dbReference type="PANTHER" id="PTHR40699">
    <property type="entry name" value="UPF0179 PROTEIN MJ1627"/>
    <property type="match status" value="1"/>
</dbReference>
<dbReference type="PANTHER" id="PTHR40699:SF1">
    <property type="entry name" value="UPF0179 PROTEIN MJ1627"/>
    <property type="match status" value="1"/>
</dbReference>
<dbReference type="Pfam" id="PF03684">
    <property type="entry name" value="UPF0179"/>
    <property type="match status" value="1"/>
</dbReference>
<dbReference type="PIRSF" id="PIRSF006595">
    <property type="entry name" value="UCP006595"/>
    <property type="match status" value="1"/>
</dbReference>
<name>Y2154_ARCFU</name>
<organism>
    <name type="scientific">Archaeoglobus fulgidus (strain ATCC 49558 / DSM 4304 / JCM 9628 / NBRC 100126 / VC-16)</name>
    <dbReference type="NCBI Taxonomy" id="224325"/>
    <lineage>
        <taxon>Archaea</taxon>
        <taxon>Methanobacteriati</taxon>
        <taxon>Methanobacteriota</taxon>
        <taxon>Archaeoglobi</taxon>
        <taxon>Archaeoglobales</taxon>
        <taxon>Archaeoglobaceae</taxon>
        <taxon>Archaeoglobus</taxon>
    </lineage>
</organism>
<keyword id="KW-1185">Reference proteome</keyword>
<evidence type="ECO:0000305" key="1"/>
<sequence>MNEEVNKIITLCGKDWAKIGVEFIFLGGKQECENCKIKKTCLKLKEGAKYKIVGLRDGAVQECPLHDEGVVAVEVVELPIIALVDSKIAVEGAKIHYEQRKCDVYDCSMYSLCHPIELNNGETVIVEKVIGDAPEQCRKGHSVIVAELRRAEE</sequence>
<accession>O28128</accession>